<keyword id="KW-0414">Isoprene biosynthesis</keyword>
<keyword id="KW-0456">Lyase</keyword>
<keyword id="KW-0479">Metal-binding</keyword>
<keyword id="KW-1185">Reference proteome</keyword>
<reference key="1">
    <citation type="journal article" date="2007" name="J. Bacteriol.">
        <title>The complete genome sequence of Roseobacter denitrificans reveals a mixotrophic rather than photosynthetic metabolism.</title>
        <authorList>
            <person name="Swingley W.D."/>
            <person name="Sadekar S."/>
            <person name="Mastrian S.D."/>
            <person name="Matthies H.J."/>
            <person name="Hao J."/>
            <person name="Ramos H."/>
            <person name="Acharya C.R."/>
            <person name="Conrad A.L."/>
            <person name="Taylor H.L."/>
            <person name="Dejesa L.C."/>
            <person name="Shah M.K."/>
            <person name="O'Huallachain M.E."/>
            <person name="Lince M.T."/>
            <person name="Blankenship R.E."/>
            <person name="Beatty J.T."/>
            <person name="Touchman J.W."/>
        </authorList>
    </citation>
    <scope>NUCLEOTIDE SEQUENCE [LARGE SCALE GENOMIC DNA]</scope>
    <source>
        <strain>ATCC 33942 / OCh 114</strain>
    </source>
</reference>
<evidence type="ECO:0000255" key="1">
    <source>
        <dbReference type="HAMAP-Rule" id="MF_00107"/>
    </source>
</evidence>
<name>ISPF_ROSDO</name>
<feature type="chain" id="PRO_1000022872" description="2-C-methyl-D-erythritol 2,4-cyclodiphosphate synthase">
    <location>
        <begin position="1"/>
        <end position="159"/>
    </location>
</feature>
<feature type="binding site" evidence="1">
    <location>
        <begin position="10"/>
        <end position="12"/>
    </location>
    <ligand>
        <name>4-CDP-2-C-methyl-D-erythritol 2-phosphate</name>
        <dbReference type="ChEBI" id="CHEBI:57919"/>
    </ligand>
</feature>
<feature type="binding site" evidence="1">
    <location>
        <position position="10"/>
    </location>
    <ligand>
        <name>a divalent metal cation</name>
        <dbReference type="ChEBI" id="CHEBI:60240"/>
    </ligand>
</feature>
<feature type="binding site" evidence="1">
    <location>
        <position position="12"/>
    </location>
    <ligand>
        <name>a divalent metal cation</name>
        <dbReference type="ChEBI" id="CHEBI:60240"/>
    </ligand>
</feature>
<feature type="binding site" evidence="1">
    <location>
        <begin position="36"/>
        <end position="37"/>
    </location>
    <ligand>
        <name>4-CDP-2-C-methyl-D-erythritol 2-phosphate</name>
        <dbReference type="ChEBI" id="CHEBI:57919"/>
    </ligand>
</feature>
<feature type="binding site" evidence="1">
    <location>
        <position position="44"/>
    </location>
    <ligand>
        <name>a divalent metal cation</name>
        <dbReference type="ChEBI" id="CHEBI:60240"/>
    </ligand>
</feature>
<feature type="binding site" evidence="1">
    <location>
        <begin position="58"/>
        <end position="60"/>
    </location>
    <ligand>
        <name>4-CDP-2-C-methyl-D-erythritol 2-phosphate</name>
        <dbReference type="ChEBI" id="CHEBI:57919"/>
    </ligand>
</feature>
<feature type="binding site" evidence="1">
    <location>
        <begin position="134"/>
        <end position="137"/>
    </location>
    <ligand>
        <name>4-CDP-2-C-methyl-D-erythritol 2-phosphate</name>
        <dbReference type="ChEBI" id="CHEBI:57919"/>
    </ligand>
</feature>
<feature type="binding site" evidence="1">
    <location>
        <position position="141"/>
    </location>
    <ligand>
        <name>4-CDP-2-C-methyl-D-erythritol 2-phosphate</name>
        <dbReference type="ChEBI" id="CHEBI:57919"/>
    </ligand>
</feature>
<feature type="binding site" evidence="1">
    <location>
        <position position="144"/>
    </location>
    <ligand>
        <name>4-CDP-2-C-methyl-D-erythritol 2-phosphate</name>
        <dbReference type="ChEBI" id="CHEBI:57919"/>
    </ligand>
</feature>
<feature type="site" description="Transition state stabilizer" evidence="1">
    <location>
        <position position="36"/>
    </location>
</feature>
<feature type="site" description="Transition state stabilizer" evidence="1">
    <location>
        <position position="135"/>
    </location>
</feature>
<dbReference type="EC" id="4.6.1.12" evidence="1"/>
<dbReference type="EMBL" id="CP000362">
    <property type="protein sequence ID" value="ABG32298.1"/>
    <property type="molecule type" value="Genomic_DNA"/>
</dbReference>
<dbReference type="RefSeq" id="WP_011568914.1">
    <property type="nucleotide sequence ID" value="NC_008209.1"/>
</dbReference>
<dbReference type="SMR" id="Q165P5"/>
<dbReference type="STRING" id="375451.RD1_2767"/>
<dbReference type="KEGG" id="rde:RD1_2767"/>
<dbReference type="eggNOG" id="COG0245">
    <property type="taxonomic scope" value="Bacteria"/>
</dbReference>
<dbReference type="HOGENOM" id="CLU_084630_2_0_5"/>
<dbReference type="OrthoDB" id="9804336at2"/>
<dbReference type="UniPathway" id="UPA00056">
    <property type="reaction ID" value="UER00095"/>
</dbReference>
<dbReference type="Proteomes" id="UP000007029">
    <property type="component" value="Chromosome"/>
</dbReference>
<dbReference type="GO" id="GO:0008685">
    <property type="term" value="F:2-C-methyl-D-erythritol 2,4-cyclodiphosphate synthase activity"/>
    <property type="evidence" value="ECO:0007669"/>
    <property type="project" value="UniProtKB-UniRule"/>
</dbReference>
<dbReference type="GO" id="GO:0046872">
    <property type="term" value="F:metal ion binding"/>
    <property type="evidence" value="ECO:0007669"/>
    <property type="project" value="UniProtKB-KW"/>
</dbReference>
<dbReference type="GO" id="GO:0019288">
    <property type="term" value="P:isopentenyl diphosphate biosynthetic process, methylerythritol 4-phosphate pathway"/>
    <property type="evidence" value="ECO:0007669"/>
    <property type="project" value="UniProtKB-UniRule"/>
</dbReference>
<dbReference type="GO" id="GO:0016114">
    <property type="term" value="P:terpenoid biosynthetic process"/>
    <property type="evidence" value="ECO:0007669"/>
    <property type="project" value="InterPro"/>
</dbReference>
<dbReference type="CDD" id="cd00554">
    <property type="entry name" value="MECDP_synthase"/>
    <property type="match status" value="1"/>
</dbReference>
<dbReference type="FunFam" id="3.30.1330.50:FF:000001">
    <property type="entry name" value="2-C-methyl-D-erythritol 2,4-cyclodiphosphate synthase"/>
    <property type="match status" value="1"/>
</dbReference>
<dbReference type="Gene3D" id="3.30.1330.50">
    <property type="entry name" value="2-C-methyl-D-erythritol 2,4-cyclodiphosphate synthase"/>
    <property type="match status" value="1"/>
</dbReference>
<dbReference type="HAMAP" id="MF_00107">
    <property type="entry name" value="IspF"/>
    <property type="match status" value="1"/>
</dbReference>
<dbReference type="InterPro" id="IPR003526">
    <property type="entry name" value="MECDP_synthase"/>
</dbReference>
<dbReference type="InterPro" id="IPR020555">
    <property type="entry name" value="MECDP_synthase_CS"/>
</dbReference>
<dbReference type="InterPro" id="IPR036571">
    <property type="entry name" value="MECDP_synthase_sf"/>
</dbReference>
<dbReference type="NCBIfam" id="TIGR00151">
    <property type="entry name" value="ispF"/>
    <property type="match status" value="1"/>
</dbReference>
<dbReference type="PANTHER" id="PTHR43181">
    <property type="entry name" value="2-C-METHYL-D-ERYTHRITOL 2,4-CYCLODIPHOSPHATE SYNTHASE, CHLOROPLASTIC"/>
    <property type="match status" value="1"/>
</dbReference>
<dbReference type="PANTHER" id="PTHR43181:SF1">
    <property type="entry name" value="2-C-METHYL-D-ERYTHRITOL 2,4-CYCLODIPHOSPHATE SYNTHASE, CHLOROPLASTIC"/>
    <property type="match status" value="1"/>
</dbReference>
<dbReference type="Pfam" id="PF02542">
    <property type="entry name" value="YgbB"/>
    <property type="match status" value="1"/>
</dbReference>
<dbReference type="SUPFAM" id="SSF69765">
    <property type="entry name" value="IpsF-like"/>
    <property type="match status" value="1"/>
</dbReference>
<dbReference type="PROSITE" id="PS01350">
    <property type="entry name" value="ISPF"/>
    <property type="match status" value="1"/>
</dbReference>
<sequence length="159" mass="16710">MDIRLGNGFDVHAFGPGDHVTLCGVKIPHGQGLVGHSDADVAMHTVTDAIYGALAMGDIGQHFPPSDPQWKGAASDIFLKHAVAQASEQGFEINNVDCTLICEFPKIGPHAQAMREAMARIMGMALSRISVKATTSERLGFTGRGEGIACIATAALVRA</sequence>
<proteinExistence type="inferred from homology"/>
<organism>
    <name type="scientific">Roseobacter denitrificans (strain ATCC 33942 / OCh 114)</name>
    <name type="common">Erythrobacter sp. (strain OCh 114)</name>
    <name type="synonym">Roseobacter denitrificans</name>
    <dbReference type="NCBI Taxonomy" id="375451"/>
    <lineage>
        <taxon>Bacteria</taxon>
        <taxon>Pseudomonadati</taxon>
        <taxon>Pseudomonadota</taxon>
        <taxon>Alphaproteobacteria</taxon>
        <taxon>Rhodobacterales</taxon>
        <taxon>Roseobacteraceae</taxon>
        <taxon>Roseobacter</taxon>
    </lineage>
</organism>
<accession>Q165P5</accession>
<comment type="function">
    <text evidence="1">Involved in the biosynthesis of isopentenyl diphosphate (IPP) and dimethylallyl diphosphate (DMAPP), two major building blocks of isoprenoid compounds. Catalyzes the conversion of 4-diphosphocytidyl-2-C-methyl-D-erythritol 2-phosphate (CDP-ME2P) to 2-C-methyl-D-erythritol 2,4-cyclodiphosphate (ME-CPP) with a corresponding release of cytidine 5-monophosphate (CMP).</text>
</comment>
<comment type="catalytic activity">
    <reaction evidence="1">
        <text>4-CDP-2-C-methyl-D-erythritol 2-phosphate = 2-C-methyl-D-erythritol 2,4-cyclic diphosphate + CMP</text>
        <dbReference type="Rhea" id="RHEA:23864"/>
        <dbReference type="ChEBI" id="CHEBI:57919"/>
        <dbReference type="ChEBI" id="CHEBI:58483"/>
        <dbReference type="ChEBI" id="CHEBI:60377"/>
        <dbReference type="EC" id="4.6.1.12"/>
    </reaction>
</comment>
<comment type="cofactor">
    <cofactor evidence="1">
        <name>a divalent metal cation</name>
        <dbReference type="ChEBI" id="CHEBI:60240"/>
    </cofactor>
    <text evidence="1">Binds 1 divalent metal cation per subunit.</text>
</comment>
<comment type="pathway">
    <text evidence="1">Isoprenoid biosynthesis; isopentenyl diphosphate biosynthesis via DXP pathway; isopentenyl diphosphate from 1-deoxy-D-xylulose 5-phosphate: step 4/6.</text>
</comment>
<comment type="subunit">
    <text evidence="1">Homotrimer.</text>
</comment>
<comment type="similarity">
    <text evidence="1">Belongs to the IspF family.</text>
</comment>
<gene>
    <name evidence="1" type="primary">ispF</name>
    <name type="ordered locus">RD1_2767</name>
</gene>
<protein>
    <recommendedName>
        <fullName evidence="1">2-C-methyl-D-erythritol 2,4-cyclodiphosphate synthase</fullName>
        <shortName evidence="1">MECDP-synthase</shortName>
        <shortName evidence="1">MECPP-synthase</shortName>
        <shortName evidence="1">MECPS</shortName>
        <ecNumber evidence="1">4.6.1.12</ecNumber>
    </recommendedName>
</protein>